<organism>
    <name type="scientific">Francisella tularensis subsp. tularensis (strain WY96-3418)</name>
    <dbReference type="NCBI Taxonomy" id="418136"/>
    <lineage>
        <taxon>Bacteria</taxon>
        <taxon>Pseudomonadati</taxon>
        <taxon>Pseudomonadota</taxon>
        <taxon>Gammaproteobacteria</taxon>
        <taxon>Thiotrichales</taxon>
        <taxon>Francisellaceae</taxon>
        <taxon>Francisella</taxon>
    </lineage>
</organism>
<feature type="chain" id="PRO_1000061519" description="Putative pre-16S rRNA nuclease">
    <location>
        <begin position="1"/>
        <end position="136"/>
    </location>
</feature>
<comment type="function">
    <text evidence="1">Could be a nuclease involved in processing of the 5'-end of pre-16S rRNA.</text>
</comment>
<comment type="subcellular location">
    <subcellularLocation>
        <location evidence="1">Cytoplasm</location>
    </subcellularLocation>
</comment>
<comment type="similarity">
    <text evidence="1">Belongs to the YqgF nuclease family.</text>
</comment>
<name>YQGF_FRATW</name>
<dbReference type="EC" id="3.1.-.-" evidence="1"/>
<dbReference type="EMBL" id="CP000608">
    <property type="protein sequence ID" value="ABO46739.1"/>
    <property type="molecule type" value="Genomic_DNA"/>
</dbReference>
<dbReference type="SMR" id="A4IXT8"/>
<dbReference type="KEGG" id="ftw:FTW_0892"/>
<dbReference type="HOGENOM" id="CLU_098240_3_0_6"/>
<dbReference type="GO" id="GO:0005829">
    <property type="term" value="C:cytosol"/>
    <property type="evidence" value="ECO:0007669"/>
    <property type="project" value="TreeGrafter"/>
</dbReference>
<dbReference type="GO" id="GO:0004518">
    <property type="term" value="F:nuclease activity"/>
    <property type="evidence" value="ECO:0007669"/>
    <property type="project" value="UniProtKB-KW"/>
</dbReference>
<dbReference type="GO" id="GO:0000967">
    <property type="term" value="P:rRNA 5'-end processing"/>
    <property type="evidence" value="ECO:0007669"/>
    <property type="project" value="UniProtKB-UniRule"/>
</dbReference>
<dbReference type="CDD" id="cd16964">
    <property type="entry name" value="YqgF"/>
    <property type="match status" value="1"/>
</dbReference>
<dbReference type="Gene3D" id="3.30.420.140">
    <property type="entry name" value="YqgF/RNase H-like domain"/>
    <property type="match status" value="1"/>
</dbReference>
<dbReference type="HAMAP" id="MF_00651">
    <property type="entry name" value="Nuclease_YqgF"/>
    <property type="match status" value="1"/>
</dbReference>
<dbReference type="InterPro" id="IPR012337">
    <property type="entry name" value="RNaseH-like_sf"/>
</dbReference>
<dbReference type="InterPro" id="IPR005227">
    <property type="entry name" value="YqgF"/>
</dbReference>
<dbReference type="InterPro" id="IPR006641">
    <property type="entry name" value="YqgF/RNaseH-like_dom"/>
</dbReference>
<dbReference type="InterPro" id="IPR037027">
    <property type="entry name" value="YqgF/RNaseH-like_dom_sf"/>
</dbReference>
<dbReference type="NCBIfam" id="TIGR00250">
    <property type="entry name" value="RNAse_H_YqgF"/>
    <property type="match status" value="1"/>
</dbReference>
<dbReference type="PANTHER" id="PTHR33317">
    <property type="entry name" value="POLYNUCLEOTIDYL TRANSFERASE, RIBONUCLEASE H-LIKE SUPERFAMILY PROTEIN"/>
    <property type="match status" value="1"/>
</dbReference>
<dbReference type="PANTHER" id="PTHR33317:SF4">
    <property type="entry name" value="POLYNUCLEOTIDYL TRANSFERASE, RIBONUCLEASE H-LIKE SUPERFAMILY PROTEIN"/>
    <property type="match status" value="1"/>
</dbReference>
<dbReference type="Pfam" id="PF03652">
    <property type="entry name" value="RuvX"/>
    <property type="match status" value="1"/>
</dbReference>
<dbReference type="SMART" id="SM00732">
    <property type="entry name" value="YqgFc"/>
    <property type="match status" value="1"/>
</dbReference>
<dbReference type="SUPFAM" id="SSF53098">
    <property type="entry name" value="Ribonuclease H-like"/>
    <property type="match status" value="1"/>
</dbReference>
<accession>A4IXT8</accession>
<evidence type="ECO:0000255" key="1">
    <source>
        <dbReference type="HAMAP-Rule" id="MF_00651"/>
    </source>
</evidence>
<gene>
    <name type="ordered locus">FTW_0892</name>
</gene>
<keyword id="KW-0963">Cytoplasm</keyword>
<keyword id="KW-0378">Hydrolase</keyword>
<keyword id="KW-0540">Nuclease</keyword>
<keyword id="KW-0690">Ribosome biogenesis</keyword>
<reference key="1">
    <citation type="journal article" date="2007" name="PLoS ONE">
        <title>Complete genomic characterization of a pathogenic A.II strain of Francisella tularensis subspecies tularensis.</title>
        <authorList>
            <person name="Beckstrom-Sternberg S.M."/>
            <person name="Auerbach R.K."/>
            <person name="Godbole S."/>
            <person name="Pearson J.V."/>
            <person name="Beckstrom-Sternberg J.S."/>
            <person name="Deng Z."/>
            <person name="Munk C."/>
            <person name="Kubota K."/>
            <person name="Zhou Y."/>
            <person name="Bruce D."/>
            <person name="Noronha J."/>
            <person name="Scheuermann R.H."/>
            <person name="Wang A."/>
            <person name="Wei X."/>
            <person name="Wang J."/>
            <person name="Hao J."/>
            <person name="Wagner D.M."/>
            <person name="Brettin T.S."/>
            <person name="Brown N."/>
            <person name="Gilna P."/>
            <person name="Keim P.S."/>
        </authorList>
    </citation>
    <scope>NUCLEOTIDE SEQUENCE [LARGE SCALE GENOMIC DNA]</scope>
    <source>
        <strain>WY96-3418</strain>
    </source>
</reference>
<sequence>MFQSLIAIDYGKARIGIASGQMITKTATPIGTVETYDGVPNWIELDKIIKRWNPSDIIIGLPLDTQNFETDITKSAKDFAKEVQQRYQRKVHLINEAYSTREARWRLEEVKSKKVSHIKVDALAACVILETWMSEN</sequence>
<protein>
    <recommendedName>
        <fullName evidence="1">Putative pre-16S rRNA nuclease</fullName>
        <ecNumber evidence="1">3.1.-.-</ecNumber>
    </recommendedName>
</protein>
<proteinExistence type="inferred from homology"/>